<organism>
    <name type="scientific">Salmonella heidelberg (strain SL476)</name>
    <dbReference type="NCBI Taxonomy" id="454169"/>
    <lineage>
        <taxon>Bacteria</taxon>
        <taxon>Pseudomonadati</taxon>
        <taxon>Pseudomonadota</taxon>
        <taxon>Gammaproteobacteria</taxon>
        <taxon>Enterobacterales</taxon>
        <taxon>Enterobacteriaceae</taxon>
        <taxon>Salmonella</taxon>
    </lineage>
</organism>
<sequence length="432" mass="47679">MKFTLVATVLLTFSLSAFAVEYPVLTTASPDQVGFDSQKLHRLDGWIQNQIDAGYPSINLLVIKDNHIVLQKAWGYAKKYDGSTLLAHPIRATTNTMYDLASNTKMYATNFALQKLVYEGKIDVNDLVSKYIPGFKDMPGDKIKGKNKLRIIDILHHVAGFPADPQYPNKNVAGKLFSQSKSTTLEMIKKTPLEYQPGSKHIYSDVDYMILGFIIESITAIPLDRYVETTIYKPLGLKHTVFNPLMKGFTPPQIAATELHGNTRDGVIHFPNIRTNTLWGQVHDEKAWYSMGGVSGHAGLFSDTHDMAVLMQVMLNGGGYGNVKLFDDKTVAQFTRRSPEDATFGLGWRVNGNASMTPTFGVLASPQTYGHTGWTGTLTSIDPVNHMAIVILGNRPHSPVANPKVNPNVFVSGLLPAATYGWIVDQIYGSLK</sequence>
<evidence type="ECO:0000255" key="1">
    <source>
        <dbReference type="HAMAP-Rule" id="MF_01034"/>
    </source>
</evidence>
<comment type="catalytic activity">
    <reaction evidence="1">
        <text>Preferential cleavage: (Ac)2-L-Lys-D-Ala-|-D-Ala. Also transpeptidation of peptidyl-alanyl moieties that are N-acyl substituents of D-alanine.</text>
        <dbReference type="EC" id="3.4.16.4"/>
    </reaction>
</comment>
<comment type="subcellular location">
    <subcellularLocation>
        <location evidence="1">Cell inner membrane</location>
        <topology evidence="1">Single-pass membrane protein</topology>
    </subcellularLocation>
</comment>
<comment type="similarity">
    <text evidence="1">Belongs to the peptidase S12 family. YfeW subfamily.</text>
</comment>
<accession>B4TD53</accession>
<reference key="1">
    <citation type="journal article" date="2011" name="J. Bacteriol.">
        <title>Comparative genomics of 28 Salmonella enterica isolates: evidence for CRISPR-mediated adaptive sublineage evolution.</title>
        <authorList>
            <person name="Fricke W.F."/>
            <person name="Mammel M.K."/>
            <person name="McDermott P.F."/>
            <person name="Tartera C."/>
            <person name="White D.G."/>
            <person name="Leclerc J.E."/>
            <person name="Ravel J."/>
            <person name="Cebula T.A."/>
        </authorList>
    </citation>
    <scope>NUCLEOTIDE SEQUENCE [LARGE SCALE GENOMIC DNA]</scope>
    <source>
        <strain>SL476</strain>
    </source>
</reference>
<keyword id="KW-0121">Carboxypeptidase</keyword>
<keyword id="KW-0997">Cell inner membrane</keyword>
<keyword id="KW-1003">Cell membrane</keyword>
<keyword id="KW-0378">Hydrolase</keyword>
<keyword id="KW-0472">Membrane</keyword>
<keyword id="KW-0645">Protease</keyword>
<keyword id="KW-0812">Transmembrane</keyword>
<keyword id="KW-1133">Transmembrane helix</keyword>
<proteinExistence type="inferred from homology"/>
<dbReference type="EC" id="3.4.16.4" evidence="1"/>
<dbReference type="EMBL" id="CP001120">
    <property type="protein sequence ID" value="ACF66260.1"/>
    <property type="molecule type" value="Genomic_DNA"/>
</dbReference>
<dbReference type="SMR" id="B4TD53"/>
<dbReference type="MEROPS" id="S12.A03"/>
<dbReference type="KEGG" id="seh:SeHA_C2737"/>
<dbReference type="HOGENOM" id="CLU_020027_1_2_6"/>
<dbReference type="Proteomes" id="UP000001866">
    <property type="component" value="Chromosome"/>
</dbReference>
<dbReference type="GO" id="GO:0005886">
    <property type="term" value="C:plasma membrane"/>
    <property type="evidence" value="ECO:0007669"/>
    <property type="project" value="UniProtKB-SubCell"/>
</dbReference>
<dbReference type="GO" id="GO:0009002">
    <property type="term" value="F:serine-type D-Ala-D-Ala carboxypeptidase activity"/>
    <property type="evidence" value="ECO:0007669"/>
    <property type="project" value="UniProtKB-UniRule"/>
</dbReference>
<dbReference type="GO" id="GO:0006508">
    <property type="term" value="P:proteolysis"/>
    <property type="evidence" value="ECO:0007669"/>
    <property type="project" value="UniProtKB-KW"/>
</dbReference>
<dbReference type="Gene3D" id="3.40.710.10">
    <property type="entry name" value="DD-peptidase/beta-lactamase superfamily"/>
    <property type="match status" value="1"/>
</dbReference>
<dbReference type="HAMAP" id="MF_01034">
    <property type="entry name" value="S12_YfeW"/>
    <property type="match status" value="1"/>
</dbReference>
<dbReference type="InterPro" id="IPR001466">
    <property type="entry name" value="Beta-lactam-related"/>
</dbReference>
<dbReference type="InterPro" id="IPR012338">
    <property type="entry name" value="Beta-lactam/transpept-like"/>
</dbReference>
<dbReference type="InterPro" id="IPR050789">
    <property type="entry name" value="Diverse_Enzym_Activities"/>
</dbReference>
<dbReference type="InterPro" id="IPR022849">
    <property type="entry name" value="Pept_S12_YfeW/YbbE-like"/>
</dbReference>
<dbReference type="NCBIfam" id="NF002968">
    <property type="entry name" value="PRK03642.1"/>
    <property type="match status" value="1"/>
</dbReference>
<dbReference type="PANTHER" id="PTHR43283">
    <property type="entry name" value="BETA-LACTAMASE-RELATED"/>
    <property type="match status" value="1"/>
</dbReference>
<dbReference type="PANTHER" id="PTHR43283:SF11">
    <property type="entry name" value="BETA-LACTAMASE-RELATED DOMAIN-CONTAINING PROTEIN"/>
    <property type="match status" value="1"/>
</dbReference>
<dbReference type="Pfam" id="PF00144">
    <property type="entry name" value="Beta-lactamase"/>
    <property type="match status" value="1"/>
</dbReference>
<dbReference type="SUPFAM" id="SSF56601">
    <property type="entry name" value="beta-lactamase/transpeptidase-like"/>
    <property type="match status" value="1"/>
</dbReference>
<protein>
    <recommendedName>
        <fullName evidence="1">Putative D-alanyl-D-alanine carboxypeptidase</fullName>
        <ecNumber evidence="1">3.4.16.4</ecNumber>
    </recommendedName>
    <alternativeName>
        <fullName evidence="1">DD-carboxypeptidase</fullName>
        <shortName evidence="1">DD-CPase</shortName>
    </alternativeName>
</protein>
<gene>
    <name evidence="1" type="primary">yfeW</name>
    <name type="ordered locus">SeHA_C2737</name>
</gene>
<feature type="chain" id="PRO_1000135853" description="Putative D-alanyl-D-alanine carboxypeptidase">
    <location>
        <begin position="1"/>
        <end position="432"/>
    </location>
</feature>
<feature type="transmembrane region" description="Helical; Signal-anchor" evidence="1">
    <location>
        <begin position="7"/>
        <end position="25"/>
    </location>
</feature>
<name>YFEW_SALHS</name>